<organism>
    <name type="scientific">Vanderwaltozyma polyspora (strain ATCC 22028 / DSM 70294 / BCRC 21397 / CBS 2163 / NBRC 10782 / NRRL Y-8283 / UCD 57-17)</name>
    <name type="common">Kluyveromyces polysporus</name>
    <dbReference type="NCBI Taxonomy" id="436907"/>
    <lineage>
        <taxon>Eukaryota</taxon>
        <taxon>Fungi</taxon>
        <taxon>Dikarya</taxon>
        <taxon>Ascomycota</taxon>
        <taxon>Saccharomycotina</taxon>
        <taxon>Saccharomycetes</taxon>
        <taxon>Saccharomycetales</taxon>
        <taxon>Saccharomycetaceae</taxon>
        <taxon>Vanderwaltozyma</taxon>
    </lineage>
</organism>
<keyword id="KW-0137">Centromere</keyword>
<keyword id="KW-0158">Chromosome</keyword>
<keyword id="KW-0175">Coiled coil</keyword>
<keyword id="KW-0995">Kinetochore</keyword>
<keyword id="KW-0539">Nucleus</keyword>
<keyword id="KW-1185">Reference proteome</keyword>
<name>ZWINT_VANPO</name>
<feature type="chain" id="PRO_0000408564" description="Outer kinetochore KNL1 complex subunit KRE28">
    <location>
        <begin position="1"/>
        <end position="378"/>
    </location>
</feature>
<feature type="coiled-coil region" evidence="2">
    <location>
        <begin position="1"/>
        <end position="32"/>
    </location>
</feature>
<feature type="coiled-coil region" evidence="2">
    <location>
        <begin position="130"/>
        <end position="172"/>
    </location>
</feature>
<feature type="coiled-coil region" evidence="2">
    <location>
        <begin position="224"/>
        <end position="277"/>
    </location>
</feature>
<gene>
    <name type="primary">KRE28</name>
    <name type="ORF">Kpol_2002p21</name>
</gene>
<comment type="function">
    <text evidence="1">Acts as a component of the outer kinetochore KNL1 complex that facilitates microtubule-kinetochore interactions and the spindle assembly checkpoint. Kinetochores, consisting of a centromere-associated inner segment and a microtubule-contacting outer segment, play a crucial role in chromosome segregation by mediating the physical connection between centromeric DNA and spindle microtubules. The outer kinetochore is made up of the ten-subunit KMN network, comprising the MIS12, NDC80 and KNL1 complexes, and auxiliary microtubule-associated components; together they connect the outer kinetochore with the inner kinetochore, bind microtubules, and mediate interactions with mitotic checkpoint proteins that delay anaphase until chromosomes are bioriented on the spindle.</text>
</comment>
<comment type="subunit">
    <text evidence="1">Component of the KNL1/SPC105 complex composed of SPC105 and KRE28. Part of the ten-subunit outer kinetochore KMN network that includes the KNL1, MIS12 and NDC80 complexes.</text>
</comment>
<comment type="subcellular location">
    <subcellularLocation>
        <location evidence="1">Nucleus</location>
    </subcellularLocation>
    <subcellularLocation>
        <location evidence="1">Chromosome</location>
        <location evidence="1">Centromere</location>
        <location evidence="1">Kinetochore</location>
    </subcellularLocation>
</comment>
<comment type="similarity">
    <text evidence="3">Belongs to the KRE28 family.</text>
</comment>
<protein>
    <recommendedName>
        <fullName evidence="3">Outer kinetochore KNL1 complex subunit KRE28</fullName>
    </recommendedName>
    <alternativeName>
        <fullName>Spindle pole body component KRE28</fullName>
    </alternativeName>
</protein>
<dbReference type="EMBL" id="DS480383">
    <property type="protein sequence ID" value="EDO18951.1"/>
    <property type="molecule type" value="Genomic_DNA"/>
</dbReference>
<dbReference type="RefSeq" id="XP_001646809.1">
    <property type="nucleotide sequence ID" value="XM_001646759.1"/>
</dbReference>
<dbReference type="SMR" id="A7TFD7"/>
<dbReference type="FunCoup" id="A7TFD7">
    <property type="interactions" value="34"/>
</dbReference>
<dbReference type="STRING" id="436907.A7TFD7"/>
<dbReference type="GeneID" id="5547274"/>
<dbReference type="KEGG" id="vpo:Kpol_2002p21"/>
<dbReference type="eggNOG" id="ENOG502S19U">
    <property type="taxonomic scope" value="Eukaryota"/>
</dbReference>
<dbReference type="HOGENOM" id="CLU_062083_0_0_1"/>
<dbReference type="InParanoid" id="A7TFD7"/>
<dbReference type="OMA" id="GNEIDEC"/>
<dbReference type="OrthoDB" id="4065660at2759"/>
<dbReference type="PhylomeDB" id="A7TFD7"/>
<dbReference type="Proteomes" id="UP000000267">
    <property type="component" value="Unassembled WGS sequence"/>
</dbReference>
<dbReference type="GO" id="GO:0000776">
    <property type="term" value="C:kinetochore"/>
    <property type="evidence" value="ECO:0000250"/>
    <property type="project" value="UniProtKB"/>
</dbReference>
<dbReference type="GO" id="GO:0180019">
    <property type="term" value="C:Knl1/Spc105 complex"/>
    <property type="evidence" value="ECO:0000250"/>
    <property type="project" value="UniProtKB"/>
</dbReference>
<dbReference type="GO" id="GO:0005634">
    <property type="term" value="C:nucleus"/>
    <property type="evidence" value="ECO:0007669"/>
    <property type="project" value="UniProtKB-SubCell"/>
</dbReference>
<dbReference type="GO" id="GO:0031619">
    <property type="term" value="P:homologous chromosome orientation in meiotic metaphase I"/>
    <property type="evidence" value="ECO:0000250"/>
    <property type="project" value="UniProtKB"/>
</dbReference>
<dbReference type="GO" id="GO:1905325">
    <property type="term" value="P:regulation of meiosis I spindle assembly checkpoint"/>
    <property type="evidence" value="ECO:0000250"/>
    <property type="project" value="UniProtKB"/>
</dbReference>
<dbReference type="InterPro" id="IPR031361">
    <property type="entry name" value="Kre28"/>
</dbReference>
<dbReference type="Pfam" id="PF17097">
    <property type="entry name" value="Kre28"/>
    <property type="match status" value="1"/>
</dbReference>
<proteinExistence type="inferred from homology"/>
<sequence>METQAVKTIRDELRELENTVAQASDMVLSEQDHRNASAIREMTQSVIAMSKENSLISVSNEIDYNEEIGNLAIDPSLIDEKIKQSNNFVELLKLTHLEQEALDYFLRYTISSTNTLELESTSDPKFVSLENEVTELENKTLTEHRDKIQEAKKDISDKSKDLANKQDQINELCLGAANSVDECWKMLNELEDIHSQRDNDVKETLSQDTTTTSDLIEETYKEWSSLQTSLTELNNSKDELDQLIAFKNEKHKDNDSTKIRNANIKNKTITENVKMLKLLINFWESNFIVPGSKKSKLSNLEVYPQTKKFQFKCAEQYTVIIQLNQNGGSIKSIEIFENDGKSVQENKNLSSLILNKYKNPLSSYPIFQVINDIVEELK</sequence>
<evidence type="ECO:0000250" key="1">
    <source>
        <dbReference type="UniProtKB" id="Q04431"/>
    </source>
</evidence>
<evidence type="ECO:0000255" key="2"/>
<evidence type="ECO:0000305" key="3"/>
<accession>A7TFD7</accession>
<reference key="1">
    <citation type="journal article" date="2007" name="Proc. Natl. Acad. Sci. U.S.A.">
        <title>Independent sorting-out of thousands of duplicated gene pairs in two yeast species descended from a whole-genome duplication.</title>
        <authorList>
            <person name="Scannell D.R."/>
            <person name="Frank A.C."/>
            <person name="Conant G.C."/>
            <person name="Byrne K.P."/>
            <person name="Woolfit M."/>
            <person name="Wolfe K.H."/>
        </authorList>
    </citation>
    <scope>NUCLEOTIDE SEQUENCE [LARGE SCALE GENOMIC DNA]</scope>
    <source>
        <strain>ATCC 22028 / DSM 70294 / BCRC 21397 / CBS 2163 / NBRC 10782 / NRRL Y-8283 / UCD 57-17</strain>
    </source>
</reference>